<organism>
    <name type="scientific">Synechococcus sp. (strain JA-3-3Ab)</name>
    <name type="common">Cyanobacteria bacterium Yellowstone A-Prime</name>
    <dbReference type="NCBI Taxonomy" id="321327"/>
    <lineage>
        <taxon>Bacteria</taxon>
        <taxon>Bacillati</taxon>
        <taxon>Cyanobacteriota</taxon>
        <taxon>Cyanophyceae</taxon>
        <taxon>Synechococcales</taxon>
        <taxon>Synechococcaceae</taxon>
        <taxon>Synechococcus</taxon>
    </lineage>
</organism>
<keyword id="KW-0963">Cytoplasm</keyword>
<keyword id="KW-0342">GTP-binding</keyword>
<keyword id="KW-0396">Initiation factor</keyword>
<keyword id="KW-0547">Nucleotide-binding</keyword>
<keyword id="KW-0648">Protein biosynthesis</keyword>
<reference key="1">
    <citation type="journal article" date="2007" name="ISME J.">
        <title>Population level functional diversity in a microbial community revealed by comparative genomic and metagenomic analyses.</title>
        <authorList>
            <person name="Bhaya D."/>
            <person name="Grossman A.R."/>
            <person name="Steunou A.-S."/>
            <person name="Khuri N."/>
            <person name="Cohan F.M."/>
            <person name="Hamamura N."/>
            <person name="Melendrez M.C."/>
            <person name="Bateson M.M."/>
            <person name="Ward D.M."/>
            <person name="Heidelberg J.F."/>
        </authorList>
    </citation>
    <scope>NUCLEOTIDE SEQUENCE [LARGE SCALE GENOMIC DNA]</scope>
    <source>
        <strain>JA-3-3Ab</strain>
    </source>
</reference>
<dbReference type="EMBL" id="CP000239">
    <property type="protein sequence ID" value="ABD00465.1"/>
    <property type="molecule type" value="Genomic_DNA"/>
</dbReference>
<dbReference type="RefSeq" id="WP_011431138.1">
    <property type="nucleotide sequence ID" value="NC_007775.1"/>
</dbReference>
<dbReference type="SMR" id="Q2JSB7"/>
<dbReference type="STRING" id="321327.CYA_2338"/>
<dbReference type="KEGG" id="cya:CYA_2338"/>
<dbReference type="eggNOG" id="COG0532">
    <property type="taxonomic scope" value="Bacteria"/>
</dbReference>
<dbReference type="HOGENOM" id="CLU_006301_7_0_3"/>
<dbReference type="OrthoDB" id="9811804at2"/>
<dbReference type="Proteomes" id="UP000008818">
    <property type="component" value="Chromosome"/>
</dbReference>
<dbReference type="GO" id="GO:0005829">
    <property type="term" value="C:cytosol"/>
    <property type="evidence" value="ECO:0007669"/>
    <property type="project" value="TreeGrafter"/>
</dbReference>
<dbReference type="GO" id="GO:0005525">
    <property type="term" value="F:GTP binding"/>
    <property type="evidence" value="ECO:0007669"/>
    <property type="project" value="UniProtKB-KW"/>
</dbReference>
<dbReference type="GO" id="GO:0003924">
    <property type="term" value="F:GTPase activity"/>
    <property type="evidence" value="ECO:0007669"/>
    <property type="project" value="UniProtKB-UniRule"/>
</dbReference>
<dbReference type="GO" id="GO:0003743">
    <property type="term" value="F:translation initiation factor activity"/>
    <property type="evidence" value="ECO:0007669"/>
    <property type="project" value="UniProtKB-UniRule"/>
</dbReference>
<dbReference type="CDD" id="cd01887">
    <property type="entry name" value="IF2_eIF5B"/>
    <property type="match status" value="1"/>
</dbReference>
<dbReference type="CDD" id="cd03702">
    <property type="entry name" value="IF2_mtIF2_II"/>
    <property type="match status" value="1"/>
</dbReference>
<dbReference type="CDD" id="cd03692">
    <property type="entry name" value="mtIF2_IVc"/>
    <property type="match status" value="1"/>
</dbReference>
<dbReference type="FunFam" id="2.40.30.10:FF:000008">
    <property type="entry name" value="Translation initiation factor IF-2"/>
    <property type="match status" value="1"/>
</dbReference>
<dbReference type="FunFam" id="2.40.30.10:FF:000054">
    <property type="entry name" value="Translation initiation factor IF-2"/>
    <property type="match status" value="1"/>
</dbReference>
<dbReference type="FunFam" id="3.40.50.10050:FF:000001">
    <property type="entry name" value="Translation initiation factor IF-2"/>
    <property type="match status" value="1"/>
</dbReference>
<dbReference type="FunFam" id="3.40.50.300:FF:000019">
    <property type="entry name" value="Translation initiation factor IF-2"/>
    <property type="match status" value="1"/>
</dbReference>
<dbReference type="Gene3D" id="1.10.10.2480">
    <property type="match status" value="1"/>
</dbReference>
<dbReference type="Gene3D" id="3.40.50.300">
    <property type="entry name" value="P-loop containing nucleotide triphosphate hydrolases"/>
    <property type="match status" value="1"/>
</dbReference>
<dbReference type="Gene3D" id="2.40.30.10">
    <property type="entry name" value="Translation factors"/>
    <property type="match status" value="2"/>
</dbReference>
<dbReference type="Gene3D" id="3.40.50.10050">
    <property type="entry name" value="Translation initiation factor IF- 2, domain 3"/>
    <property type="match status" value="1"/>
</dbReference>
<dbReference type="HAMAP" id="MF_00100_B">
    <property type="entry name" value="IF_2_B"/>
    <property type="match status" value="1"/>
</dbReference>
<dbReference type="InterPro" id="IPR053905">
    <property type="entry name" value="EF-G-like_DII"/>
</dbReference>
<dbReference type="InterPro" id="IPR044145">
    <property type="entry name" value="IF2_II"/>
</dbReference>
<dbReference type="InterPro" id="IPR006847">
    <property type="entry name" value="IF2_N"/>
</dbReference>
<dbReference type="InterPro" id="IPR027417">
    <property type="entry name" value="P-loop_NTPase"/>
</dbReference>
<dbReference type="InterPro" id="IPR005225">
    <property type="entry name" value="Small_GTP-bd"/>
</dbReference>
<dbReference type="InterPro" id="IPR000795">
    <property type="entry name" value="T_Tr_GTP-bd_dom"/>
</dbReference>
<dbReference type="InterPro" id="IPR000178">
    <property type="entry name" value="TF_IF2_bacterial-like"/>
</dbReference>
<dbReference type="InterPro" id="IPR015760">
    <property type="entry name" value="TIF_IF2"/>
</dbReference>
<dbReference type="InterPro" id="IPR023115">
    <property type="entry name" value="TIF_IF2_dom3"/>
</dbReference>
<dbReference type="InterPro" id="IPR036925">
    <property type="entry name" value="TIF_IF2_dom3_sf"/>
</dbReference>
<dbReference type="InterPro" id="IPR009000">
    <property type="entry name" value="Transl_B-barrel_sf"/>
</dbReference>
<dbReference type="NCBIfam" id="TIGR00487">
    <property type="entry name" value="IF-2"/>
    <property type="match status" value="1"/>
</dbReference>
<dbReference type="NCBIfam" id="TIGR00231">
    <property type="entry name" value="small_GTP"/>
    <property type="match status" value="1"/>
</dbReference>
<dbReference type="PANTHER" id="PTHR43381:SF5">
    <property type="entry name" value="TR-TYPE G DOMAIN-CONTAINING PROTEIN"/>
    <property type="match status" value="1"/>
</dbReference>
<dbReference type="PANTHER" id="PTHR43381">
    <property type="entry name" value="TRANSLATION INITIATION FACTOR IF-2-RELATED"/>
    <property type="match status" value="1"/>
</dbReference>
<dbReference type="Pfam" id="PF22042">
    <property type="entry name" value="EF-G_D2"/>
    <property type="match status" value="1"/>
</dbReference>
<dbReference type="Pfam" id="PF00009">
    <property type="entry name" value="GTP_EFTU"/>
    <property type="match status" value="1"/>
</dbReference>
<dbReference type="Pfam" id="PF11987">
    <property type="entry name" value="IF-2"/>
    <property type="match status" value="1"/>
</dbReference>
<dbReference type="Pfam" id="PF04760">
    <property type="entry name" value="IF2_N"/>
    <property type="match status" value="2"/>
</dbReference>
<dbReference type="PRINTS" id="PR00315">
    <property type="entry name" value="ELONGATNFCT"/>
</dbReference>
<dbReference type="SUPFAM" id="SSF52156">
    <property type="entry name" value="Initiation factor IF2/eIF5b, domain 3"/>
    <property type="match status" value="1"/>
</dbReference>
<dbReference type="SUPFAM" id="SSF52540">
    <property type="entry name" value="P-loop containing nucleoside triphosphate hydrolases"/>
    <property type="match status" value="1"/>
</dbReference>
<dbReference type="SUPFAM" id="SSF50447">
    <property type="entry name" value="Translation proteins"/>
    <property type="match status" value="2"/>
</dbReference>
<dbReference type="PROSITE" id="PS51722">
    <property type="entry name" value="G_TR_2"/>
    <property type="match status" value="1"/>
</dbReference>
<dbReference type="PROSITE" id="PS01176">
    <property type="entry name" value="IF2"/>
    <property type="match status" value="1"/>
</dbReference>
<proteinExistence type="inferred from homology"/>
<gene>
    <name evidence="2" type="primary">infB</name>
    <name type="ordered locus">CYA_2338</name>
</gene>
<name>IF2_SYNJA</name>
<protein>
    <recommendedName>
        <fullName evidence="2">Translation initiation factor IF-2</fullName>
    </recommendedName>
</protein>
<feature type="chain" id="PRO_0000335515" description="Translation initiation factor IF-2">
    <location>
        <begin position="1"/>
        <end position="1031"/>
    </location>
</feature>
<feature type="domain" description="tr-type G">
    <location>
        <begin position="522"/>
        <end position="695"/>
    </location>
</feature>
<feature type="region of interest" description="Disordered" evidence="3">
    <location>
        <begin position="33"/>
        <end position="369"/>
    </location>
</feature>
<feature type="region of interest" description="Disordered" evidence="3">
    <location>
        <begin position="388"/>
        <end position="436"/>
    </location>
</feature>
<feature type="region of interest" description="G1" evidence="1">
    <location>
        <begin position="531"/>
        <end position="538"/>
    </location>
</feature>
<feature type="region of interest" description="G2" evidence="1">
    <location>
        <begin position="556"/>
        <end position="560"/>
    </location>
</feature>
<feature type="region of interest" description="G3" evidence="1">
    <location>
        <begin position="581"/>
        <end position="584"/>
    </location>
</feature>
<feature type="region of interest" description="G4" evidence="1">
    <location>
        <begin position="635"/>
        <end position="638"/>
    </location>
</feature>
<feature type="region of interest" description="G5" evidence="1">
    <location>
        <begin position="671"/>
        <end position="673"/>
    </location>
</feature>
<feature type="compositionally biased region" description="Basic and acidic residues" evidence="3">
    <location>
        <begin position="45"/>
        <end position="56"/>
    </location>
</feature>
<feature type="compositionally biased region" description="Low complexity" evidence="3">
    <location>
        <begin position="96"/>
        <end position="105"/>
    </location>
</feature>
<feature type="compositionally biased region" description="Polar residues" evidence="3">
    <location>
        <begin position="108"/>
        <end position="123"/>
    </location>
</feature>
<feature type="compositionally biased region" description="Low complexity" evidence="3">
    <location>
        <begin position="148"/>
        <end position="171"/>
    </location>
</feature>
<feature type="compositionally biased region" description="Pro residues" evidence="3">
    <location>
        <begin position="184"/>
        <end position="200"/>
    </location>
</feature>
<feature type="compositionally biased region" description="Basic and acidic residues" evidence="3">
    <location>
        <begin position="250"/>
        <end position="281"/>
    </location>
</feature>
<feature type="compositionally biased region" description="Pro residues" evidence="3">
    <location>
        <begin position="286"/>
        <end position="299"/>
    </location>
</feature>
<feature type="compositionally biased region" description="Low complexity" evidence="3">
    <location>
        <begin position="419"/>
        <end position="435"/>
    </location>
</feature>
<feature type="binding site" evidence="2">
    <location>
        <begin position="531"/>
        <end position="538"/>
    </location>
    <ligand>
        <name>GTP</name>
        <dbReference type="ChEBI" id="CHEBI:37565"/>
    </ligand>
</feature>
<feature type="binding site" evidence="2">
    <location>
        <begin position="581"/>
        <end position="585"/>
    </location>
    <ligand>
        <name>GTP</name>
        <dbReference type="ChEBI" id="CHEBI:37565"/>
    </ligand>
</feature>
<feature type="binding site" evidence="2">
    <location>
        <begin position="635"/>
        <end position="638"/>
    </location>
    <ligand>
        <name>GTP</name>
        <dbReference type="ChEBI" id="CHEBI:37565"/>
    </ligand>
</feature>
<sequence length="1031" mass="111749">MTDRVRLYEIAREMGCDNREVLEVCEQLGIPFKSHSSTISPEQAELVRSKLSEPRVVKPTRPRLRPKLQPESSQPQPPVEAKASERPQHIVGIRRPAPAQQQAAAGEASSSKPSPQRPDQLSSEKGAAGGSLELIGPPRRQVDPPARPAAQEPQPAAASTRPEAAAKAGSPEPSPAPAAKRPTVLPPPRRAASGPEPPQRAPESRRPGLAEAPSPSGARTSPPVEEKVSLPQAEQRPRPQLVGAPVRPGTRPEPRSPVAKKEESSDSGKADEAPRPQRRLELVGPPTRPVAKPLPPEPDASPRLPEGIPEERPTPVLAEAPVRPAAPKLKRKTVEEEDEELQALERRAGRTQAKRKRSRRREEGDGDVLDLDPLTVLSSVKQAELNALKPLARPTAKPPSYRPPAAAARPRPAAERPQRPSASAEATAPEAAAESLPEEKVLLLEGSLTVQELARRLRVAETEIIKTLFFKGVRVTINQVLDESLAESVAKELGYEVRRPEAEPKAKKTEILDLEDIDHLVPRPPVVTIMGHVDHGKTTLLDAIRHTNVAQREAGGITQRIGAYHVDVDFEGQKRRIVFLDTPGHQAFTAMRARGARVTDIAVLVVAADDGVQPQTLEALSHARAAQVPIIVAINKIDKPGSQPERVKQQLAEHGLLPEEWGGDTPMVEVSALTRRNLDALLEMILLVADVAELQANPNRPARGTVIEAHLDKARGPVATLLVQNGTLRVGDTLVAGAVLGRVKAMMDDRGQRLQEAGPSSAVQLLGLEEVPAAGDEFQVYADEKEARRIAEERAEALRQARLQQALLSRRVSLGSISAKAQEGQLKELNLIIKTDVQGSAEAIQTALQDLPQEEVRLRVLLAAPGEITETDVDLAAASDAIILGFNTSFAPGARQAADDKGVDVREYDIIYNLLDDLRAAMEGLLEPEEVEEPLGQAEVRKVIPISRGAVAGSYVLSGKVQRNALVRVRRKGEVVYQGRLDSLKRFKDDVREVAAGFECGIGIEKFDAWQEGDLIEVYQMVTKRRTLAPA</sequence>
<accession>Q2JSB7</accession>
<evidence type="ECO:0000250" key="1"/>
<evidence type="ECO:0000255" key="2">
    <source>
        <dbReference type="HAMAP-Rule" id="MF_00100"/>
    </source>
</evidence>
<evidence type="ECO:0000256" key="3">
    <source>
        <dbReference type="SAM" id="MobiDB-lite"/>
    </source>
</evidence>
<comment type="function">
    <text evidence="2">One of the essential components for the initiation of protein synthesis. Protects formylmethionyl-tRNA from spontaneous hydrolysis and promotes its binding to the 30S ribosomal subunits. Also involved in the hydrolysis of GTP during the formation of the 70S ribosomal complex.</text>
</comment>
<comment type="subcellular location">
    <subcellularLocation>
        <location evidence="2">Cytoplasm</location>
    </subcellularLocation>
</comment>
<comment type="similarity">
    <text evidence="2">Belongs to the TRAFAC class translation factor GTPase superfamily. Classic translation factor GTPase family. IF-2 subfamily.</text>
</comment>